<comment type="function">
    <text evidence="1">Catalyzes the irreversible beta-carboxylation of phosphoenolpyruvate (PEP) to form oxaloacetate (OAA), a four-carbon dicarboxylic acid source for the tricarboxylic acid cycle.</text>
</comment>
<comment type="catalytic activity">
    <reaction evidence="1">
        <text>oxaloacetate + phosphate = phosphoenolpyruvate + hydrogencarbonate</text>
        <dbReference type="Rhea" id="RHEA:28370"/>
        <dbReference type="ChEBI" id="CHEBI:16452"/>
        <dbReference type="ChEBI" id="CHEBI:17544"/>
        <dbReference type="ChEBI" id="CHEBI:43474"/>
        <dbReference type="ChEBI" id="CHEBI:58702"/>
        <dbReference type="EC" id="4.1.1.31"/>
    </reaction>
</comment>
<comment type="cofactor">
    <cofactor evidence="1">
        <name>Mg(2+)</name>
        <dbReference type="ChEBI" id="CHEBI:18420"/>
    </cofactor>
</comment>
<comment type="subunit">
    <text evidence="1">Homotetramer.</text>
</comment>
<comment type="similarity">
    <text evidence="1">Belongs to the PEPCase type 2 family.</text>
</comment>
<comment type="sequence caution" evidence="2">
    <conflict type="erroneous initiation">
        <sequence resource="EMBL-CDS" id="ABD39949"/>
    </conflict>
    <text>Extended N-terminus.</text>
</comment>
<protein>
    <recommendedName>
        <fullName evidence="1">Phosphoenolpyruvate carboxylase</fullName>
        <shortName evidence="1">PEPC</shortName>
        <shortName evidence="1">PEPCase</shortName>
        <ecNumber evidence="1">4.1.1.31</ecNumber>
    </recommendedName>
</protein>
<accession>Q2FLH1</accession>
<evidence type="ECO:0000255" key="1">
    <source>
        <dbReference type="HAMAP-Rule" id="MF_01904"/>
    </source>
</evidence>
<evidence type="ECO:0000305" key="2"/>
<sequence>MKIPRTMSTQHPDNVHTPFFTENIELTGEDEVKEAYYVYSHLGCTEQMWDCEGKEVDNYVVKKLLSRYGDYFKEHHLGRDLFLTLRVPNPEIERTEAKILLETLGSIPRSYDVAHHFYNDTYAPIFEIILPMTTSFASIDNIYQYYCDFVIGQQYKRLGGRDLTIAEWIGPFHPDKIRVIPLFEDKDGMLAADTILRRYFQDKDLDYQRVFLARSDPAVNYGQIGAVLLNKIALWRLHLLSEDTGIPVYPIIGAGSAPFRGNLRPDTVRRVTDEYAGAYTFTIQSAFKYDTNLEEAVSAIRYLEEREITPAREIDDTYAISLIERYAAGYQKQIRSLAPLINRVAAYIPSRRKRKLHVGLFGYSRNMGGVSLPRAITVTAALYSIGIPPEVLGLSALTENDREFVLENYRYVTEDLSDACRYLNPDSSFLPDEIKKILPDWIEIDPHSEHRVLSGQIEKAVTACQIDSVQDMIIRAGAIRKFLG</sequence>
<proteinExistence type="inferred from homology"/>
<name>CAPPA_METHJ</name>
<keyword id="KW-0120">Carbon dioxide fixation</keyword>
<keyword id="KW-0456">Lyase</keyword>
<keyword id="KW-0460">Magnesium</keyword>
<keyword id="KW-1185">Reference proteome</keyword>
<feature type="chain" id="PRO_0000309605" description="Phosphoenolpyruvate carboxylase">
    <location>
        <begin position="1"/>
        <end position="484"/>
    </location>
</feature>
<dbReference type="EC" id="4.1.1.31" evidence="1"/>
<dbReference type="EMBL" id="CP000254">
    <property type="protein sequence ID" value="ABD39949.1"/>
    <property type="status" value="ALT_INIT"/>
    <property type="molecule type" value="Genomic_DNA"/>
</dbReference>
<dbReference type="RefSeq" id="WP_011447245.1">
    <property type="nucleotide sequence ID" value="NC_007796.1"/>
</dbReference>
<dbReference type="SMR" id="Q2FLH1"/>
<dbReference type="STRING" id="323259.Mhun_0174"/>
<dbReference type="EnsemblBacteria" id="ABD39949">
    <property type="protein sequence ID" value="ABD39949"/>
    <property type="gene ID" value="Mhun_0174"/>
</dbReference>
<dbReference type="GeneID" id="3922617"/>
<dbReference type="KEGG" id="mhu:Mhun_0174"/>
<dbReference type="eggNOG" id="arCOG04435">
    <property type="taxonomic scope" value="Archaea"/>
</dbReference>
<dbReference type="HOGENOM" id="CLU_517433_0_0_2"/>
<dbReference type="InParanoid" id="Q2FLH1"/>
<dbReference type="OrthoDB" id="85849at2157"/>
<dbReference type="Proteomes" id="UP000001941">
    <property type="component" value="Chromosome"/>
</dbReference>
<dbReference type="GO" id="GO:0000287">
    <property type="term" value="F:magnesium ion binding"/>
    <property type="evidence" value="ECO:0007669"/>
    <property type="project" value="UniProtKB-UniRule"/>
</dbReference>
<dbReference type="GO" id="GO:0008964">
    <property type="term" value="F:phosphoenolpyruvate carboxylase activity"/>
    <property type="evidence" value="ECO:0007669"/>
    <property type="project" value="UniProtKB-UniRule"/>
</dbReference>
<dbReference type="GO" id="GO:0015977">
    <property type="term" value="P:carbon fixation"/>
    <property type="evidence" value="ECO:0007669"/>
    <property type="project" value="UniProtKB-UniRule"/>
</dbReference>
<dbReference type="GO" id="GO:0006107">
    <property type="term" value="P:oxaloacetate metabolic process"/>
    <property type="evidence" value="ECO:0007669"/>
    <property type="project" value="UniProtKB-UniRule"/>
</dbReference>
<dbReference type="GO" id="GO:0006099">
    <property type="term" value="P:tricarboxylic acid cycle"/>
    <property type="evidence" value="ECO:0007669"/>
    <property type="project" value="InterPro"/>
</dbReference>
<dbReference type="HAMAP" id="MF_01904">
    <property type="entry name" value="PEPcase_type2"/>
    <property type="match status" value="1"/>
</dbReference>
<dbReference type="InterPro" id="IPR007566">
    <property type="entry name" value="PEP_COase_arc-type"/>
</dbReference>
<dbReference type="InterPro" id="IPR015813">
    <property type="entry name" value="Pyrv/PenolPyrv_kinase-like_dom"/>
</dbReference>
<dbReference type="NCBIfam" id="TIGR02751">
    <property type="entry name" value="PEPCase_arch"/>
    <property type="match status" value="1"/>
</dbReference>
<dbReference type="Pfam" id="PF14010">
    <property type="entry name" value="PEPcase_2"/>
    <property type="match status" value="1"/>
</dbReference>
<dbReference type="PIRSF" id="PIRSF006677">
    <property type="entry name" value="UCP006677"/>
    <property type="match status" value="1"/>
</dbReference>
<dbReference type="SUPFAM" id="SSF51621">
    <property type="entry name" value="Phosphoenolpyruvate/pyruvate domain"/>
    <property type="match status" value="1"/>
</dbReference>
<gene>
    <name evidence="1" type="primary">ppcA</name>
    <name type="ordered locus">Mhun_0174</name>
</gene>
<organism>
    <name type="scientific">Methanospirillum hungatei JF-1 (strain ATCC 27890 / DSM 864 / NBRC 100397 / JF-1)</name>
    <dbReference type="NCBI Taxonomy" id="323259"/>
    <lineage>
        <taxon>Archaea</taxon>
        <taxon>Methanobacteriati</taxon>
        <taxon>Methanobacteriota</taxon>
        <taxon>Stenosarchaea group</taxon>
        <taxon>Methanomicrobia</taxon>
        <taxon>Methanomicrobiales</taxon>
        <taxon>Methanospirillaceae</taxon>
        <taxon>Methanospirillum</taxon>
    </lineage>
</organism>
<reference key="1">
    <citation type="journal article" date="2016" name="Stand. Genomic Sci.">
        <title>Complete genome sequence of Methanospirillum hungatei type strain JF1.</title>
        <authorList>
            <person name="Gunsalus R.P."/>
            <person name="Cook L.E."/>
            <person name="Crable B."/>
            <person name="Rohlin L."/>
            <person name="McDonald E."/>
            <person name="Mouttaki H."/>
            <person name="Sieber J.R."/>
            <person name="Poweleit N."/>
            <person name="Zhou H."/>
            <person name="Lapidus A.L."/>
            <person name="Daligault H.E."/>
            <person name="Land M."/>
            <person name="Gilna P."/>
            <person name="Ivanova N."/>
            <person name="Kyrpides N."/>
            <person name="Culley D.E."/>
            <person name="McInerney M.J."/>
        </authorList>
    </citation>
    <scope>NUCLEOTIDE SEQUENCE [LARGE SCALE GENOMIC DNA]</scope>
    <source>
        <strain>ATCC 27890 / DSM 864 / NBRC 100397 / JF-1</strain>
    </source>
</reference>